<feature type="chain" id="PRO_0000229442" description="GMP synthase [glutamine-hydrolyzing]">
    <location>
        <begin position="1"/>
        <end position="513"/>
    </location>
</feature>
<feature type="domain" description="Glutamine amidotransferase type-1" evidence="1">
    <location>
        <begin position="5"/>
        <end position="196"/>
    </location>
</feature>
<feature type="domain" description="GMPS ATP-PPase" evidence="1">
    <location>
        <begin position="197"/>
        <end position="388"/>
    </location>
</feature>
<feature type="active site" description="Nucleophile" evidence="1">
    <location>
        <position position="83"/>
    </location>
</feature>
<feature type="active site" evidence="1">
    <location>
        <position position="170"/>
    </location>
</feature>
<feature type="active site" evidence="1">
    <location>
        <position position="172"/>
    </location>
</feature>
<feature type="binding site" evidence="1">
    <location>
        <begin position="224"/>
        <end position="230"/>
    </location>
    <ligand>
        <name>ATP</name>
        <dbReference type="ChEBI" id="CHEBI:30616"/>
    </ligand>
</feature>
<protein>
    <recommendedName>
        <fullName evidence="1">GMP synthase [glutamine-hydrolyzing]</fullName>
        <ecNumber evidence="1">6.3.5.2</ecNumber>
    </recommendedName>
    <alternativeName>
        <fullName evidence="1">GMP synthetase</fullName>
    </alternativeName>
    <alternativeName>
        <fullName evidence="1">Glutamine amidotransferase</fullName>
    </alternativeName>
</protein>
<evidence type="ECO:0000255" key="1">
    <source>
        <dbReference type="HAMAP-Rule" id="MF_00344"/>
    </source>
</evidence>
<organism>
    <name type="scientific">Mesoplasma florum (strain ATCC 33453 / NBRC 100688 / NCTC 11704 / L1)</name>
    <name type="common">Acholeplasma florum</name>
    <dbReference type="NCBI Taxonomy" id="265311"/>
    <lineage>
        <taxon>Bacteria</taxon>
        <taxon>Bacillati</taxon>
        <taxon>Mycoplasmatota</taxon>
        <taxon>Mollicutes</taxon>
        <taxon>Entomoplasmatales</taxon>
        <taxon>Entomoplasmataceae</taxon>
        <taxon>Mesoplasma</taxon>
    </lineage>
</organism>
<name>GUAA_MESFL</name>
<comment type="function">
    <text evidence="1">Catalyzes the synthesis of GMP from XMP.</text>
</comment>
<comment type="catalytic activity">
    <reaction evidence="1">
        <text>XMP + L-glutamine + ATP + H2O = GMP + L-glutamate + AMP + diphosphate + 2 H(+)</text>
        <dbReference type="Rhea" id="RHEA:11680"/>
        <dbReference type="ChEBI" id="CHEBI:15377"/>
        <dbReference type="ChEBI" id="CHEBI:15378"/>
        <dbReference type="ChEBI" id="CHEBI:29985"/>
        <dbReference type="ChEBI" id="CHEBI:30616"/>
        <dbReference type="ChEBI" id="CHEBI:33019"/>
        <dbReference type="ChEBI" id="CHEBI:57464"/>
        <dbReference type="ChEBI" id="CHEBI:58115"/>
        <dbReference type="ChEBI" id="CHEBI:58359"/>
        <dbReference type="ChEBI" id="CHEBI:456215"/>
        <dbReference type="EC" id="6.3.5.2"/>
    </reaction>
</comment>
<comment type="pathway">
    <text evidence="1">Purine metabolism; GMP biosynthesis; GMP from XMP (L-Gln route): step 1/1.</text>
</comment>
<comment type="subunit">
    <text evidence="1">Homodimer.</text>
</comment>
<keyword id="KW-0067">ATP-binding</keyword>
<keyword id="KW-0315">Glutamine amidotransferase</keyword>
<keyword id="KW-0332">GMP biosynthesis</keyword>
<keyword id="KW-0436">Ligase</keyword>
<keyword id="KW-0547">Nucleotide-binding</keyword>
<keyword id="KW-0658">Purine biosynthesis</keyword>
<keyword id="KW-1185">Reference proteome</keyword>
<accession>Q6F1C4</accession>
<sequence length="513" mass="57744">MKNTQILILDFGSQYTQLLARRVREANIYTEVLPFDTSIEKIKEYPLLKGIILSGGPSSVYLQNAYKIDSEILNLDIAILGVCYGMQLLTQYFQGAVELADEQEFGKAIITIDDKKNPLFKNVTTESQVWMSHADHVTELPVDFKQIAHSNASIAAIAHNTKPIYGIQFHAEVTHSLQGKEMLENFLYDIAKCNKDWNLDDFIDQQIKEIKETVKDKQVILGLSGGVDSSVAAAIIGKAIGKQLTCIFVDTGLLRKNETIEVMKAYETNFDINIKLVEASDLFFSELKGIKEPEAKRKIIGKCFIDVFTDAARQHKDADFLAQGTIYPDVIESSSHGASSKTIKSHHNVGGLPEDLKFRLIEPLRNLFKDEVRQVGFKLGLPEEMINRHPFPGPGLGIRVIEEVTKDKVEILQEADAIFIKKLREWNLYNTVSQAFVTLLPVKTVGVMGDNRTYDYVVALRSVNTIDFMTATSTHLPWEFLDEVVNEIINKVDNVNRVVYDVTSKPPGTIEWE</sequence>
<proteinExistence type="inferred from homology"/>
<gene>
    <name evidence="1" type="primary">guaA</name>
    <name type="ordered locus">Mfl342</name>
</gene>
<reference key="1">
    <citation type="submission" date="2004-06" db="EMBL/GenBank/DDBJ databases">
        <authorList>
            <person name="Birren B.W."/>
            <person name="Stange-Thomann N."/>
            <person name="Hafez N."/>
            <person name="DeCaprio D."/>
            <person name="Fisher S."/>
            <person name="Butler J."/>
            <person name="Elkins T."/>
            <person name="Kodira C.D."/>
            <person name="Major J."/>
            <person name="Wang S."/>
            <person name="Nicol R."/>
            <person name="Nusbaum C."/>
        </authorList>
    </citation>
    <scope>NUCLEOTIDE SEQUENCE [LARGE SCALE GENOMIC DNA]</scope>
    <source>
        <strain>ATCC 33453 / NBRC 100688 / NCTC 11704 / L1</strain>
    </source>
</reference>
<dbReference type="EC" id="6.3.5.2" evidence="1"/>
<dbReference type="EMBL" id="AE017263">
    <property type="protein sequence ID" value="AAT75699.1"/>
    <property type="molecule type" value="Genomic_DNA"/>
</dbReference>
<dbReference type="RefSeq" id="WP_011183239.1">
    <property type="nucleotide sequence ID" value="NC_006055.1"/>
</dbReference>
<dbReference type="RefSeq" id="YP_053583.1">
    <property type="nucleotide sequence ID" value="NC_006055.1"/>
</dbReference>
<dbReference type="SMR" id="Q6F1C4"/>
<dbReference type="STRING" id="265311.Mfl342"/>
<dbReference type="MEROPS" id="C26.957"/>
<dbReference type="PaxDb" id="265311-Mfl342"/>
<dbReference type="EnsemblBacteria" id="AAT75699">
    <property type="protein sequence ID" value="AAT75699"/>
    <property type="gene ID" value="Mfl342"/>
</dbReference>
<dbReference type="GeneID" id="2897992"/>
<dbReference type="KEGG" id="mfl:Mfl342"/>
<dbReference type="PATRIC" id="fig|265311.5.peg.342"/>
<dbReference type="eggNOG" id="COG0518">
    <property type="taxonomic scope" value="Bacteria"/>
</dbReference>
<dbReference type="eggNOG" id="COG0519">
    <property type="taxonomic scope" value="Bacteria"/>
</dbReference>
<dbReference type="HOGENOM" id="CLU_014340_0_5_14"/>
<dbReference type="OrthoDB" id="9802219at2"/>
<dbReference type="UniPathway" id="UPA00189">
    <property type="reaction ID" value="UER00296"/>
</dbReference>
<dbReference type="Proteomes" id="UP000006647">
    <property type="component" value="Chromosome"/>
</dbReference>
<dbReference type="GO" id="GO:0005829">
    <property type="term" value="C:cytosol"/>
    <property type="evidence" value="ECO:0007669"/>
    <property type="project" value="TreeGrafter"/>
</dbReference>
<dbReference type="GO" id="GO:0005524">
    <property type="term" value="F:ATP binding"/>
    <property type="evidence" value="ECO:0007669"/>
    <property type="project" value="UniProtKB-UniRule"/>
</dbReference>
<dbReference type="GO" id="GO:0003921">
    <property type="term" value="F:GMP synthase activity"/>
    <property type="evidence" value="ECO:0007669"/>
    <property type="project" value="InterPro"/>
</dbReference>
<dbReference type="CDD" id="cd01742">
    <property type="entry name" value="GATase1_GMP_Synthase"/>
    <property type="match status" value="1"/>
</dbReference>
<dbReference type="CDD" id="cd01997">
    <property type="entry name" value="GMP_synthase_C"/>
    <property type="match status" value="1"/>
</dbReference>
<dbReference type="FunFam" id="3.30.300.10:FF:000002">
    <property type="entry name" value="GMP synthase [glutamine-hydrolyzing]"/>
    <property type="match status" value="1"/>
</dbReference>
<dbReference type="FunFam" id="3.40.50.620:FF:000001">
    <property type="entry name" value="GMP synthase [glutamine-hydrolyzing]"/>
    <property type="match status" value="1"/>
</dbReference>
<dbReference type="FunFam" id="3.40.50.880:FF:000001">
    <property type="entry name" value="GMP synthase [glutamine-hydrolyzing]"/>
    <property type="match status" value="1"/>
</dbReference>
<dbReference type="Gene3D" id="3.30.300.10">
    <property type="match status" value="1"/>
</dbReference>
<dbReference type="Gene3D" id="3.40.50.880">
    <property type="match status" value="1"/>
</dbReference>
<dbReference type="Gene3D" id="3.40.50.620">
    <property type="entry name" value="HUPs"/>
    <property type="match status" value="1"/>
</dbReference>
<dbReference type="HAMAP" id="MF_00344">
    <property type="entry name" value="GMP_synthase"/>
    <property type="match status" value="1"/>
</dbReference>
<dbReference type="InterPro" id="IPR029062">
    <property type="entry name" value="Class_I_gatase-like"/>
</dbReference>
<dbReference type="InterPro" id="IPR017926">
    <property type="entry name" value="GATASE"/>
</dbReference>
<dbReference type="InterPro" id="IPR001674">
    <property type="entry name" value="GMP_synth_C"/>
</dbReference>
<dbReference type="InterPro" id="IPR004739">
    <property type="entry name" value="GMP_synth_GATase"/>
</dbReference>
<dbReference type="InterPro" id="IPR022955">
    <property type="entry name" value="GMP_synthase"/>
</dbReference>
<dbReference type="InterPro" id="IPR025777">
    <property type="entry name" value="GMPS_ATP_PPase_dom"/>
</dbReference>
<dbReference type="InterPro" id="IPR022310">
    <property type="entry name" value="NAD/GMP_synthase"/>
</dbReference>
<dbReference type="InterPro" id="IPR014729">
    <property type="entry name" value="Rossmann-like_a/b/a_fold"/>
</dbReference>
<dbReference type="NCBIfam" id="TIGR00884">
    <property type="entry name" value="guaA_Cterm"/>
    <property type="match status" value="1"/>
</dbReference>
<dbReference type="NCBIfam" id="TIGR00888">
    <property type="entry name" value="guaA_Nterm"/>
    <property type="match status" value="1"/>
</dbReference>
<dbReference type="NCBIfam" id="NF000848">
    <property type="entry name" value="PRK00074.1"/>
    <property type="match status" value="1"/>
</dbReference>
<dbReference type="PANTHER" id="PTHR11922:SF2">
    <property type="entry name" value="GMP SYNTHASE [GLUTAMINE-HYDROLYZING]"/>
    <property type="match status" value="1"/>
</dbReference>
<dbReference type="PANTHER" id="PTHR11922">
    <property type="entry name" value="GMP SYNTHASE-RELATED"/>
    <property type="match status" value="1"/>
</dbReference>
<dbReference type="Pfam" id="PF00117">
    <property type="entry name" value="GATase"/>
    <property type="match status" value="1"/>
</dbReference>
<dbReference type="Pfam" id="PF00958">
    <property type="entry name" value="GMP_synt_C"/>
    <property type="match status" value="1"/>
</dbReference>
<dbReference type="Pfam" id="PF02540">
    <property type="entry name" value="NAD_synthase"/>
    <property type="match status" value="1"/>
</dbReference>
<dbReference type="PRINTS" id="PR00097">
    <property type="entry name" value="ANTSNTHASEII"/>
</dbReference>
<dbReference type="PRINTS" id="PR00096">
    <property type="entry name" value="GATASE"/>
</dbReference>
<dbReference type="SUPFAM" id="SSF52402">
    <property type="entry name" value="Adenine nucleotide alpha hydrolases-like"/>
    <property type="match status" value="1"/>
</dbReference>
<dbReference type="SUPFAM" id="SSF52317">
    <property type="entry name" value="Class I glutamine amidotransferase-like"/>
    <property type="match status" value="1"/>
</dbReference>
<dbReference type="SUPFAM" id="SSF54810">
    <property type="entry name" value="GMP synthetase C-terminal dimerisation domain"/>
    <property type="match status" value="1"/>
</dbReference>
<dbReference type="PROSITE" id="PS51273">
    <property type="entry name" value="GATASE_TYPE_1"/>
    <property type="match status" value="1"/>
</dbReference>
<dbReference type="PROSITE" id="PS51553">
    <property type="entry name" value="GMPS_ATP_PPASE"/>
    <property type="match status" value="1"/>
</dbReference>